<evidence type="ECO:0000250" key="1">
    <source>
        <dbReference type="UniProtKB" id="Q80HV8"/>
    </source>
</evidence>
<evidence type="ECO:0000255" key="2"/>
<evidence type="ECO:0000305" key="3"/>
<gene>
    <name type="primary">OPG137</name>
    <name type="ORF">A11R</name>
</gene>
<feature type="chain" id="PRO_0000099231" description="Protein OPG137">
    <location>
        <begin position="1"/>
        <end position="318"/>
    </location>
</feature>
<feature type="coiled-coil region" evidence="2">
    <location>
        <begin position="145"/>
        <end position="172"/>
    </location>
</feature>
<reference key="1">
    <citation type="journal article" date="1990" name="Virology">
        <title>The complete DNA sequence of vaccinia virus.</title>
        <authorList>
            <person name="Goebel S.J."/>
            <person name="Johnson G.P."/>
            <person name="Perkus M.E."/>
            <person name="Davis S.W."/>
            <person name="Winslow J.P."/>
            <person name="Paoletti E."/>
        </authorList>
    </citation>
    <scope>NUCLEOTIDE SEQUENCE [LARGE SCALE GENOMIC DNA]</scope>
</reference>
<reference key="2">
    <citation type="journal article" date="1990" name="Virology">
        <title>Appendix to 'The complete DNA sequence of vaccinia virus'.</title>
        <authorList>
            <person name="Goebel S.J."/>
            <person name="Johnson G.P."/>
            <person name="Perkus M.E."/>
            <person name="Davis S.W."/>
            <person name="Winslow J.P."/>
            <person name="Paoletti E."/>
        </authorList>
    </citation>
    <scope>COMPLETE GENOME</scope>
</reference>
<organism>
    <name type="scientific">Vaccinia virus (strain Copenhagen)</name>
    <name type="common">VACV</name>
    <dbReference type="NCBI Taxonomy" id="10249"/>
    <lineage>
        <taxon>Viruses</taxon>
        <taxon>Varidnaviria</taxon>
        <taxon>Bamfordvirae</taxon>
        <taxon>Nucleocytoviricota</taxon>
        <taxon>Pokkesviricetes</taxon>
        <taxon>Chitovirales</taxon>
        <taxon>Poxviridae</taxon>
        <taxon>Chordopoxvirinae</taxon>
        <taxon>Orthopoxvirus</taxon>
        <taxon>Vaccinia virus</taxon>
    </lineage>
</organism>
<comment type="function">
    <text evidence="1">Required for viral crescent formation early during virus morphogenesis.</text>
</comment>
<comment type="subunit">
    <text evidence="1">Homomultimer. Interacts with OPG160.</text>
</comment>
<comment type="subcellular location">
    <subcellularLocation>
        <location evidence="1">Host cytoplasm</location>
    </subcellularLocation>
    <text evidence="1">Localizes to the cytoplasmic viral factory. Not incorporated into virus particles. Does not seem to be a transmembrane protein.</text>
</comment>
<comment type="induction">
    <text>Expressed in the late phase of the viral replicative cycle.</text>
</comment>
<comment type="PTM">
    <text evidence="1">Phosphorylated by a OPG054-independent mechanism.</text>
</comment>
<comment type="similarity">
    <text evidence="3">Belongs to the orthopoxvirus OPG137 family.</text>
</comment>
<sequence length="318" mass="36135">MTTVPVTDIQNDLITEFSEDNYPSNKNYEITLRQMSILTHVNNVVDREHNAAVVSSPEEISSQLNEDLFPDDDSPATIIERVQPHTTIIDDTPPPTFRRELLISEQRQQREKRFNITVSKNAEAIMESRSMISSMPTQTPSLGVVYDKDKRIQMLEDEVVNLRNQRSNTKSSDNLDNFTRILFGKTPYKSTEVNKRIAIVNYANLNGSPLSVEDLDVCSEDEIDRIYKTIKQYHESRKRKIIVTNVIIIVINIIEQALLKLGFEEIKGLSTDITSEIIDVEIGDDCDAVASKLGIGNSPVLNIVLFILKIFVKRIKII</sequence>
<protein>
    <recommendedName>
        <fullName>Protein OPG137</fullName>
    </recommendedName>
</protein>
<dbReference type="EMBL" id="M35027">
    <property type="protein sequence ID" value="AAA48133.1"/>
    <property type="molecule type" value="Genomic_DNA"/>
</dbReference>
<dbReference type="PIR" id="D42518">
    <property type="entry name" value="D42518"/>
</dbReference>
<dbReference type="SMR" id="P20988"/>
<dbReference type="DIP" id="DIP-2187N"/>
<dbReference type="IntAct" id="P20988">
    <property type="interactions" value="1"/>
</dbReference>
<dbReference type="MINT" id="P20988"/>
<dbReference type="Proteomes" id="UP000008269">
    <property type="component" value="Segment"/>
</dbReference>
<dbReference type="GO" id="GO:0030430">
    <property type="term" value="C:host cell cytoplasm"/>
    <property type="evidence" value="ECO:0007669"/>
    <property type="project" value="UniProtKB-SubCell"/>
</dbReference>
<dbReference type="InterPro" id="IPR007755">
    <property type="entry name" value="Poxvirus_A11"/>
</dbReference>
<dbReference type="Pfam" id="PF05061">
    <property type="entry name" value="Pox_A11"/>
    <property type="match status" value="1"/>
</dbReference>
<organismHost>
    <name type="scientific">Homo sapiens</name>
    <name type="common">Human</name>
    <dbReference type="NCBI Taxonomy" id="9606"/>
</organismHost>
<proteinExistence type="evidence at transcript level"/>
<accession>P20988</accession>
<name>PG137_VACCC</name>
<keyword id="KW-0175">Coiled coil</keyword>
<keyword id="KW-1035">Host cytoplasm</keyword>
<keyword id="KW-0426">Late protein</keyword>
<keyword id="KW-0597">Phosphoprotein</keyword>
<keyword id="KW-1185">Reference proteome</keyword>